<protein>
    <recommendedName>
        <fullName evidence="1">Methylthioribulose-1-phosphate dehydratase</fullName>
        <shortName evidence="1">MTRu-1-P dehydratase</shortName>
        <ecNumber evidence="1">4.2.1.109</ecNumber>
    </recommendedName>
</protein>
<dbReference type="EC" id="4.2.1.109" evidence="1"/>
<dbReference type="EMBL" id="CR382125">
    <property type="protein sequence ID" value="CAG99777.1"/>
    <property type="molecule type" value="Genomic_DNA"/>
</dbReference>
<dbReference type="RefSeq" id="XP_454690.1">
    <property type="nucleotide sequence ID" value="XM_454690.1"/>
</dbReference>
<dbReference type="SMR" id="Q6CMZ9"/>
<dbReference type="FunCoup" id="Q6CMZ9">
    <property type="interactions" value="262"/>
</dbReference>
<dbReference type="STRING" id="284590.Q6CMZ9"/>
<dbReference type="PaxDb" id="284590-Q6CMZ9"/>
<dbReference type="KEGG" id="kla:KLLA0_E16435g"/>
<dbReference type="eggNOG" id="KOG2631">
    <property type="taxonomic scope" value="Eukaryota"/>
</dbReference>
<dbReference type="HOGENOM" id="CLU_006033_4_0_1"/>
<dbReference type="InParanoid" id="Q6CMZ9"/>
<dbReference type="OMA" id="WFPGTSG"/>
<dbReference type="UniPathway" id="UPA00904">
    <property type="reaction ID" value="UER00875"/>
</dbReference>
<dbReference type="Proteomes" id="UP000000598">
    <property type="component" value="Chromosome E"/>
</dbReference>
<dbReference type="GO" id="GO:0005737">
    <property type="term" value="C:cytoplasm"/>
    <property type="evidence" value="ECO:0007669"/>
    <property type="project" value="UniProtKB-SubCell"/>
</dbReference>
<dbReference type="GO" id="GO:0046570">
    <property type="term" value="F:methylthioribulose 1-phosphate dehydratase activity"/>
    <property type="evidence" value="ECO:0007669"/>
    <property type="project" value="UniProtKB-UniRule"/>
</dbReference>
<dbReference type="GO" id="GO:0008270">
    <property type="term" value="F:zinc ion binding"/>
    <property type="evidence" value="ECO:0007669"/>
    <property type="project" value="UniProtKB-UniRule"/>
</dbReference>
<dbReference type="GO" id="GO:0019509">
    <property type="term" value="P:L-methionine salvage from methylthioadenosine"/>
    <property type="evidence" value="ECO:0007669"/>
    <property type="project" value="UniProtKB-UniRule"/>
</dbReference>
<dbReference type="FunFam" id="3.40.225.10:FF:000003">
    <property type="entry name" value="Methylthioribulose-1-phosphate dehydratase"/>
    <property type="match status" value="1"/>
</dbReference>
<dbReference type="Gene3D" id="3.40.225.10">
    <property type="entry name" value="Class II aldolase/adducin N-terminal domain"/>
    <property type="match status" value="1"/>
</dbReference>
<dbReference type="HAMAP" id="MF_03116">
    <property type="entry name" value="Salvage_MtnB_euk"/>
    <property type="match status" value="1"/>
</dbReference>
<dbReference type="InterPro" id="IPR001303">
    <property type="entry name" value="Aldolase_II/adducin_N"/>
</dbReference>
<dbReference type="InterPro" id="IPR036409">
    <property type="entry name" value="Aldolase_II/adducin_N_sf"/>
</dbReference>
<dbReference type="InterPro" id="IPR017714">
    <property type="entry name" value="MethylthioRu-1-P_deHdtase_MtnB"/>
</dbReference>
<dbReference type="InterPro" id="IPR027514">
    <property type="entry name" value="Salvage_MtnB_euk"/>
</dbReference>
<dbReference type="NCBIfam" id="TIGR03328">
    <property type="entry name" value="salvage_mtnB"/>
    <property type="match status" value="1"/>
</dbReference>
<dbReference type="PANTHER" id="PTHR10640">
    <property type="entry name" value="METHYLTHIORIBULOSE-1-PHOSPHATE DEHYDRATASE"/>
    <property type="match status" value="1"/>
</dbReference>
<dbReference type="PANTHER" id="PTHR10640:SF7">
    <property type="entry name" value="METHYLTHIORIBULOSE-1-PHOSPHATE DEHYDRATASE"/>
    <property type="match status" value="1"/>
</dbReference>
<dbReference type="Pfam" id="PF00596">
    <property type="entry name" value="Aldolase_II"/>
    <property type="match status" value="1"/>
</dbReference>
<dbReference type="SMART" id="SM01007">
    <property type="entry name" value="Aldolase_II"/>
    <property type="match status" value="1"/>
</dbReference>
<dbReference type="SUPFAM" id="SSF53639">
    <property type="entry name" value="AraD/HMP-PK domain-like"/>
    <property type="match status" value="1"/>
</dbReference>
<accession>Q6CMZ9</accession>
<comment type="function">
    <text evidence="1">Catalyzes the dehydration of methylthioribulose-1-phosphate (MTRu-1-P) into 2,3-diketo-5-methylthiopentyl-1-phosphate (DK-MTP-1-P).</text>
</comment>
<comment type="catalytic activity">
    <reaction evidence="1">
        <text>5-(methylsulfanyl)-D-ribulose 1-phosphate = 5-methylsulfanyl-2,3-dioxopentyl phosphate + H2O</text>
        <dbReference type="Rhea" id="RHEA:15549"/>
        <dbReference type="ChEBI" id="CHEBI:15377"/>
        <dbReference type="ChEBI" id="CHEBI:58548"/>
        <dbReference type="ChEBI" id="CHEBI:58828"/>
        <dbReference type="EC" id="4.2.1.109"/>
    </reaction>
</comment>
<comment type="cofactor">
    <cofactor evidence="1">
        <name>Zn(2+)</name>
        <dbReference type="ChEBI" id="CHEBI:29105"/>
    </cofactor>
    <text evidence="1">Binds 1 zinc ion per subunit.</text>
</comment>
<comment type="pathway">
    <text evidence="1">Amino-acid biosynthesis; L-methionine biosynthesis via salvage pathway; L-methionine from S-methyl-5-thio-alpha-D-ribose 1-phosphate: step 2/6.</text>
</comment>
<comment type="subcellular location">
    <subcellularLocation>
        <location evidence="1">Cytoplasm</location>
    </subcellularLocation>
</comment>
<comment type="similarity">
    <text evidence="1">Belongs to the aldolase class II family. MtnB subfamily.</text>
</comment>
<organism>
    <name type="scientific">Kluyveromyces lactis (strain ATCC 8585 / CBS 2359 / DSM 70799 / NBRC 1267 / NRRL Y-1140 / WM37)</name>
    <name type="common">Yeast</name>
    <name type="synonym">Candida sphaerica</name>
    <dbReference type="NCBI Taxonomy" id="284590"/>
    <lineage>
        <taxon>Eukaryota</taxon>
        <taxon>Fungi</taxon>
        <taxon>Dikarya</taxon>
        <taxon>Ascomycota</taxon>
        <taxon>Saccharomycotina</taxon>
        <taxon>Saccharomycetes</taxon>
        <taxon>Saccharomycetales</taxon>
        <taxon>Saccharomycetaceae</taxon>
        <taxon>Kluyveromyces</taxon>
    </lineage>
</organism>
<gene>
    <name evidence="1" type="primary">MDE1</name>
    <name type="ordered locus">KLLA0E16435g</name>
</gene>
<name>MTNB_KLULA</name>
<keyword id="KW-0028">Amino-acid biosynthesis</keyword>
<keyword id="KW-0963">Cytoplasm</keyword>
<keyword id="KW-0456">Lyase</keyword>
<keyword id="KW-0479">Metal-binding</keyword>
<keyword id="KW-0486">Methionine biosynthesis</keyword>
<keyword id="KW-1185">Reference proteome</keyword>
<keyword id="KW-0862">Zinc</keyword>
<evidence type="ECO:0000255" key="1">
    <source>
        <dbReference type="HAMAP-Rule" id="MF_03116"/>
    </source>
</evidence>
<feature type="chain" id="PRO_0000393825" description="Methylthioribulose-1-phosphate dehydratase">
    <location>
        <begin position="1"/>
        <end position="205"/>
    </location>
</feature>
<feature type="active site" description="Proton donor/acceptor" evidence="1">
    <location>
        <position position="116"/>
    </location>
</feature>
<feature type="binding site" evidence="1">
    <location>
        <position position="75"/>
    </location>
    <ligand>
        <name>substrate</name>
    </ligand>
</feature>
<feature type="binding site" evidence="1">
    <location>
        <position position="93"/>
    </location>
    <ligand>
        <name>Zn(2+)</name>
        <dbReference type="ChEBI" id="CHEBI:29105"/>
    </ligand>
</feature>
<feature type="binding site" evidence="1">
    <location>
        <position position="95"/>
    </location>
    <ligand>
        <name>Zn(2+)</name>
        <dbReference type="ChEBI" id="CHEBI:29105"/>
    </ligand>
</feature>
<feature type="binding site" evidence="1">
    <location>
        <position position="171"/>
    </location>
    <ligand>
        <name>Zn(2+)</name>
        <dbReference type="ChEBI" id="CHEBI:29105"/>
    </ligand>
</feature>
<sequence>MSDTSETICSMCQLFYVNKWVLGTGGGIGIKQDNIAYISPSGIEKELLEPEQIVKYNIQDDTYQCGAPGLKPSACTPLFLELFKTLGASCVIHTHSINAVLCSMIYEKEFTIKDIEQIKAIPKGDGTNLRNVDTLRIPIIDNAPEEQDLMPALKQMIKDYPNACAVLVKRHGLFVWGPTPKKAKIYIESIDYLFEVALKMKELGQ</sequence>
<reference key="1">
    <citation type="journal article" date="2004" name="Nature">
        <title>Genome evolution in yeasts.</title>
        <authorList>
            <person name="Dujon B."/>
            <person name="Sherman D."/>
            <person name="Fischer G."/>
            <person name="Durrens P."/>
            <person name="Casaregola S."/>
            <person name="Lafontaine I."/>
            <person name="de Montigny J."/>
            <person name="Marck C."/>
            <person name="Neuveglise C."/>
            <person name="Talla E."/>
            <person name="Goffard N."/>
            <person name="Frangeul L."/>
            <person name="Aigle M."/>
            <person name="Anthouard V."/>
            <person name="Babour A."/>
            <person name="Barbe V."/>
            <person name="Barnay S."/>
            <person name="Blanchin S."/>
            <person name="Beckerich J.-M."/>
            <person name="Beyne E."/>
            <person name="Bleykasten C."/>
            <person name="Boisrame A."/>
            <person name="Boyer J."/>
            <person name="Cattolico L."/>
            <person name="Confanioleri F."/>
            <person name="de Daruvar A."/>
            <person name="Despons L."/>
            <person name="Fabre E."/>
            <person name="Fairhead C."/>
            <person name="Ferry-Dumazet H."/>
            <person name="Groppi A."/>
            <person name="Hantraye F."/>
            <person name="Hennequin C."/>
            <person name="Jauniaux N."/>
            <person name="Joyet P."/>
            <person name="Kachouri R."/>
            <person name="Kerrest A."/>
            <person name="Koszul R."/>
            <person name="Lemaire M."/>
            <person name="Lesur I."/>
            <person name="Ma L."/>
            <person name="Muller H."/>
            <person name="Nicaud J.-M."/>
            <person name="Nikolski M."/>
            <person name="Oztas S."/>
            <person name="Ozier-Kalogeropoulos O."/>
            <person name="Pellenz S."/>
            <person name="Potier S."/>
            <person name="Richard G.-F."/>
            <person name="Straub M.-L."/>
            <person name="Suleau A."/>
            <person name="Swennen D."/>
            <person name="Tekaia F."/>
            <person name="Wesolowski-Louvel M."/>
            <person name="Westhof E."/>
            <person name="Wirth B."/>
            <person name="Zeniou-Meyer M."/>
            <person name="Zivanovic Y."/>
            <person name="Bolotin-Fukuhara M."/>
            <person name="Thierry A."/>
            <person name="Bouchier C."/>
            <person name="Caudron B."/>
            <person name="Scarpelli C."/>
            <person name="Gaillardin C."/>
            <person name="Weissenbach J."/>
            <person name="Wincker P."/>
            <person name="Souciet J.-L."/>
        </authorList>
    </citation>
    <scope>NUCLEOTIDE SEQUENCE [LARGE SCALE GENOMIC DNA]</scope>
    <source>
        <strain>ATCC 8585 / CBS 2359 / DSM 70799 / NBRC 1267 / NRRL Y-1140 / WM37</strain>
    </source>
</reference>
<proteinExistence type="inferred from homology"/>